<dbReference type="EC" id="1.14.14.1" evidence="2"/>
<dbReference type="EC" id="1.14.13.n7" evidence="2"/>
<dbReference type="EMBL" id="J02627">
    <property type="protein sequence ID" value="AAA41060.1"/>
    <property type="molecule type" value="mRNA"/>
</dbReference>
<dbReference type="EMBL" id="M20131">
    <property type="protein sequence ID" value="AAA41033.1"/>
    <property type="molecule type" value="Genomic_DNA"/>
</dbReference>
<dbReference type="EMBL" id="AF061442">
    <property type="protein sequence ID" value="AAC15991.1"/>
    <property type="molecule type" value="mRNA"/>
</dbReference>
<dbReference type="EMBL" id="BC081774">
    <property type="protein sequence ID" value="AAH81774.1"/>
    <property type="molecule type" value="mRNA"/>
</dbReference>
<dbReference type="EMBL" id="S48325">
    <property type="protein sequence ID" value="AAB24151.1"/>
    <property type="molecule type" value="mRNA"/>
</dbReference>
<dbReference type="PIR" id="A25341">
    <property type="entry name" value="A25341"/>
</dbReference>
<dbReference type="RefSeq" id="NP_113731.2">
    <property type="nucleotide sequence ID" value="NM_031543.2"/>
</dbReference>
<dbReference type="SMR" id="P05182"/>
<dbReference type="BioGRID" id="247159">
    <property type="interactions" value="4"/>
</dbReference>
<dbReference type="FunCoup" id="P05182">
    <property type="interactions" value="194"/>
</dbReference>
<dbReference type="IntAct" id="P05182">
    <property type="interactions" value="2"/>
</dbReference>
<dbReference type="STRING" id="10116.ENSRNOP00000016883"/>
<dbReference type="BindingDB" id="P05182"/>
<dbReference type="ChEMBL" id="CHEMBL5978"/>
<dbReference type="iPTMnet" id="P05182"/>
<dbReference type="PhosphoSitePlus" id="P05182"/>
<dbReference type="PaxDb" id="10116-ENSRNOP00000016883"/>
<dbReference type="GeneID" id="25086"/>
<dbReference type="KEGG" id="rno:25086"/>
<dbReference type="UCSC" id="RGD:2475">
    <property type="organism name" value="rat"/>
</dbReference>
<dbReference type="AGR" id="RGD:2475"/>
<dbReference type="CTD" id="1571"/>
<dbReference type="RGD" id="2475">
    <property type="gene designation" value="Cyp2e1"/>
</dbReference>
<dbReference type="VEuPathDB" id="HostDB:ENSRNOG00000012458"/>
<dbReference type="eggNOG" id="KOG0156">
    <property type="taxonomic scope" value="Eukaryota"/>
</dbReference>
<dbReference type="HOGENOM" id="CLU_001570_22_3_1"/>
<dbReference type="InParanoid" id="P05182"/>
<dbReference type="PhylomeDB" id="P05182"/>
<dbReference type="TreeFam" id="TF352043"/>
<dbReference type="BRENDA" id="1.14.14.1">
    <property type="organism ID" value="5301"/>
</dbReference>
<dbReference type="Reactome" id="R-RNO-211981">
    <property type="pathway name" value="Xenobiotics"/>
</dbReference>
<dbReference type="Reactome" id="R-RNO-211999">
    <property type="pathway name" value="CYP2E1 reactions"/>
</dbReference>
<dbReference type="Reactome" id="R-RNO-9027307">
    <property type="pathway name" value="Biosynthesis of maresin-like SPMs"/>
</dbReference>
<dbReference type="Reactome" id="R-RNO-9749641">
    <property type="pathway name" value="Aspirin ADME"/>
</dbReference>
<dbReference type="Reactome" id="R-RNO-9753281">
    <property type="pathway name" value="Paracetamol ADME"/>
</dbReference>
<dbReference type="SABIO-RK" id="P05182"/>
<dbReference type="UniPathway" id="UPA00199"/>
<dbReference type="PRO" id="PR:P05182"/>
<dbReference type="Proteomes" id="UP000002494">
    <property type="component" value="Chromosome 1"/>
</dbReference>
<dbReference type="Bgee" id="ENSRNOG00000012458">
    <property type="expression patterns" value="Expressed in liver and 17 other cell types or tissues"/>
</dbReference>
<dbReference type="ExpressionAtlas" id="P05182">
    <property type="expression patterns" value="baseline and differential"/>
</dbReference>
<dbReference type="GO" id="GO:0005737">
    <property type="term" value="C:cytoplasm"/>
    <property type="evidence" value="ECO:0000318"/>
    <property type="project" value="GO_Central"/>
</dbReference>
<dbReference type="GO" id="GO:0005783">
    <property type="term" value="C:endoplasmic reticulum"/>
    <property type="evidence" value="ECO:0000266"/>
    <property type="project" value="RGD"/>
</dbReference>
<dbReference type="GO" id="GO:0005789">
    <property type="term" value="C:endoplasmic reticulum membrane"/>
    <property type="evidence" value="ECO:0000314"/>
    <property type="project" value="UniProtKB"/>
</dbReference>
<dbReference type="GO" id="GO:0000139">
    <property type="term" value="C:Golgi membrane"/>
    <property type="evidence" value="ECO:0000314"/>
    <property type="project" value="RGD"/>
</dbReference>
<dbReference type="GO" id="GO:0043231">
    <property type="term" value="C:intracellular membrane-bounded organelle"/>
    <property type="evidence" value="ECO:0000318"/>
    <property type="project" value="GO_Central"/>
</dbReference>
<dbReference type="GO" id="GO:0005743">
    <property type="term" value="C:mitochondrial inner membrane"/>
    <property type="evidence" value="ECO:0000314"/>
    <property type="project" value="UniProtKB"/>
</dbReference>
<dbReference type="GO" id="GO:0018601">
    <property type="term" value="F:4-nitrophenol 2-monooxygenase activity"/>
    <property type="evidence" value="ECO:0000266"/>
    <property type="project" value="RGD"/>
</dbReference>
<dbReference type="GO" id="GO:0008392">
    <property type="term" value="F:arachidonate epoxygenase activity"/>
    <property type="evidence" value="ECO:0000318"/>
    <property type="project" value="GO_Central"/>
</dbReference>
<dbReference type="GO" id="GO:0019899">
    <property type="term" value="F:enzyme binding"/>
    <property type="evidence" value="ECO:0000266"/>
    <property type="project" value="RGD"/>
</dbReference>
<dbReference type="GO" id="GO:0020037">
    <property type="term" value="F:heme binding"/>
    <property type="evidence" value="ECO:0000250"/>
    <property type="project" value="UniProtKB"/>
</dbReference>
<dbReference type="GO" id="GO:0030544">
    <property type="term" value="F:Hsp70 protein binding"/>
    <property type="evidence" value="ECO:0000314"/>
    <property type="project" value="UniProtKB"/>
</dbReference>
<dbReference type="GO" id="GO:0051879">
    <property type="term" value="F:Hsp90 protein binding"/>
    <property type="evidence" value="ECO:0000314"/>
    <property type="project" value="UniProtKB"/>
</dbReference>
<dbReference type="GO" id="GO:0005506">
    <property type="term" value="F:iron ion binding"/>
    <property type="evidence" value="ECO:0007669"/>
    <property type="project" value="InterPro"/>
</dbReference>
<dbReference type="GO" id="GO:0120319">
    <property type="term" value="F:long-chain fatty acid omega-1 hydroxylase activity"/>
    <property type="evidence" value="ECO:0000266"/>
    <property type="project" value="RGD"/>
</dbReference>
<dbReference type="GO" id="GO:0004497">
    <property type="term" value="F:monooxygenase activity"/>
    <property type="evidence" value="ECO:0000266"/>
    <property type="project" value="RGD"/>
</dbReference>
<dbReference type="GO" id="GO:0016491">
    <property type="term" value="F:oxidoreductase activity"/>
    <property type="evidence" value="ECO:0000266"/>
    <property type="project" value="RGD"/>
</dbReference>
<dbReference type="GO" id="GO:0016712">
    <property type="term" value="F:oxidoreductase activity, acting on paired donors, with incorporation or reduction of molecular oxygen, reduced flavin or flavoprotein as one donor, and incorporation of one atom of oxygen"/>
    <property type="evidence" value="ECO:0000318"/>
    <property type="project" value="GO_Central"/>
</dbReference>
<dbReference type="GO" id="GO:0018960">
    <property type="term" value="P:4-nitrophenol metabolic process"/>
    <property type="evidence" value="ECO:0000266"/>
    <property type="project" value="RGD"/>
</dbReference>
<dbReference type="GO" id="GO:0019373">
    <property type="term" value="P:epoxygenase P450 pathway"/>
    <property type="evidence" value="ECO:0000318"/>
    <property type="project" value="GO_Central"/>
</dbReference>
<dbReference type="GO" id="GO:0002933">
    <property type="term" value="P:lipid hydroxylation"/>
    <property type="evidence" value="ECO:0000266"/>
    <property type="project" value="RGD"/>
</dbReference>
<dbReference type="GO" id="GO:0001676">
    <property type="term" value="P:long-chain fatty acid metabolic process"/>
    <property type="evidence" value="ECO:0000266"/>
    <property type="project" value="RGD"/>
</dbReference>
<dbReference type="GO" id="GO:0016098">
    <property type="term" value="P:monoterpenoid metabolic process"/>
    <property type="evidence" value="ECO:0000266"/>
    <property type="project" value="RGD"/>
</dbReference>
<dbReference type="GO" id="GO:1904681">
    <property type="term" value="P:response to 3-methylcholanthrene"/>
    <property type="evidence" value="ECO:0000270"/>
    <property type="project" value="RGD"/>
</dbReference>
<dbReference type="GO" id="GO:0009617">
    <property type="term" value="P:response to bacterium"/>
    <property type="evidence" value="ECO:0000266"/>
    <property type="project" value="RGD"/>
</dbReference>
<dbReference type="GO" id="GO:0045471">
    <property type="term" value="P:response to ethanol"/>
    <property type="evidence" value="ECO:0000270"/>
    <property type="project" value="RGD"/>
</dbReference>
<dbReference type="GO" id="GO:0010193">
    <property type="term" value="P:response to ozone"/>
    <property type="evidence" value="ECO:0000270"/>
    <property type="project" value="RGD"/>
</dbReference>
<dbReference type="GO" id="GO:0009410">
    <property type="term" value="P:response to xenobiotic stimulus"/>
    <property type="evidence" value="ECO:0000270"/>
    <property type="project" value="RGD"/>
</dbReference>
<dbReference type="GO" id="GO:0008202">
    <property type="term" value="P:steroid metabolic process"/>
    <property type="evidence" value="ECO:0000266"/>
    <property type="project" value="RGD"/>
</dbReference>
<dbReference type="GO" id="GO:0006641">
    <property type="term" value="P:triglyceride metabolic process"/>
    <property type="evidence" value="ECO:0000315"/>
    <property type="project" value="RGD"/>
</dbReference>
<dbReference type="GO" id="GO:0006805">
    <property type="term" value="P:xenobiotic metabolic process"/>
    <property type="evidence" value="ECO:0000315"/>
    <property type="project" value="RGD"/>
</dbReference>
<dbReference type="CDD" id="cd20665">
    <property type="entry name" value="CYP2C-like"/>
    <property type="match status" value="1"/>
</dbReference>
<dbReference type="FunFam" id="1.10.630.10:FF:000001">
    <property type="entry name" value="Cytochrome P450, family 2"/>
    <property type="match status" value="1"/>
</dbReference>
<dbReference type="Gene3D" id="1.10.630.10">
    <property type="entry name" value="Cytochrome P450"/>
    <property type="match status" value="1"/>
</dbReference>
<dbReference type="InterPro" id="IPR001128">
    <property type="entry name" value="Cyt_P450"/>
</dbReference>
<dbReference type="InterPro" id="IPR017972">
    <property type="entry name" value="Cyt_P450_CS"/>
</dbReference>
<dbReference type="InterPro" id="IPR002401">
    <property type="entry name" value="Cyt_P450_E_grp-I"/>
</dbReference>
<dbReference type="InterPro" id="IPR008070">
    <property type="entry name" value="Cyt_P450_E_grp-I_CYP2E-like"/>
</dbReference>
<dbReference type="InterPro" id="IPR036396">
    <property type="entry name" value="Cyt_P450_sf"/>
</dbReference>
<dbReference type="InterPro" id="IPR050182">
    <property type="entry name" value="Cytochrome_P450_fam2"/>
</dbReference>
<dbReference type="PANTHER" id="PTHR24300:SF356">
    <property type="entry name" value="CYTOCHROME P450 2E1"/>
    <property type="match status" value="1"/>
</dbReference>
<dbReference type="PANTHER" id="PTHR24300">
    <property type="entry name" value="CYTOCHROME P450 508A4-RELATED"/>
    <property type="match status" value="1"/>
</dbReference>
<dbReference type="Pfam" id="PF00067">
    <property type="entry name" value="p450"/>
    <property type="match status" value="1"/>
</dbReference>
<dbReference type="PRINTS" id="PR00463">
    <property type="entry name" value="EP450I"/>
</dbReference>
<dbReference type="PRINTS" id="PR01687">
    <property type="entry name" value="EP450ICYP2E"/>
</dbReference>
<dbReference type="PRINTS" id="PR00385">
    <property type="entry name" value="P450"/>
</dbReference>
<dbReference type="SUPFAM" id="SSF48264">
    <property type="entry name" value="Cytochrome P450"/>
    <property type="match status" value="1"/>
</dbReference>
<dbReference type="PROSITE" id="PS00086">
    <property type="entry name" value="CYTOCHROME_P450"/>
    <property type="match status" value="1"/>
</dbReference>
<name>CP2E1_RAT</name>
<reference key="1">
    <citation type="journal article" date="1986" name="J. Biol. Chem.">
        <title>Complementary DNA and protein sequences of ethanol-inducible rat and human cytochrome P-450s. Transcriptional and post-transcriptional regulation of the rat enzyme.</title>
        <authorList>
            <person name="Song B.-J."/>
            <person name="Gelboin H.V."/>
            <person name="Park S.-S."/>
            <person name="Yang C.S."/>
            <person name="Gonzalez F.J."/>
        </authorList>
    </citation>
    <scope>NUCLEOTIDE SEQUENCE [MRNA]</scope>
</reference>
<reference key="2">
    <citation type="journal article" date="1988" name="J. Biol. Chem.">
        <title>The rat P450IIE1 gene: complete intron and exon sequence, chromosome mapping, and correlation of developmental expression with specific 5' cytosine demethylation.</title>
        <authorList>
            <person name="Umeno M."/>
            <person name="Song B.-J."/>
            <person name="Kozak C."/>
            <person name="Gelboin H.V."/>
            <person name="Gonzalez F.J."/>
        </authorList>
    </citation>
    <scope>NUCLEOTIDE SEQUENCE [GENOMIC DNA]</scope>
    <source>
        <tissue>Liver</tissue>
    </source>
</reference>
<reference key="3">
    <citation type="submission" date="1998-04" db="EMBL/GenBank/DDBJ databases">
        <title>The complete coding sequence of the rat brain cytochrome P450 2E1.</title>
        <authorList>
            <person name="Yoo M."/>
            <person name="Shin S.W."/>
        </authorList>
    </citation>
    <scope>NUCLEOTIDE SEQUENCE</scope>
    <source>
        <strain>Sprague-Dawley</strain>
        <tissue>Brain</tissue>
    </source>
</reference>
<reference key="4">
    <citation type="journal article" date="2004" name="Genome Res.">
        <title>The status, quality, and expansion of the NIH full-length cDNA project: the Mammalian Gene Collection (MGC).</title>
        <authorList>
            <consortium name="The MGC Project Team"/>
        </authorList>
    </citation>
    <scope>NUCLEOTIDE SEQUENCE [LARGE SCALE MRNA]</scope>
    <source>
        <tissue>Kidney</tissue>
    </source>
</reference>
<reference key="5">
    <citation type="journal article" date="1987" name="J. Biol. Chem.">
        <title>Responses to insulin by two forms of rat hepatic microsomal cytochrome P-450 that undergo major (RLM6) and minor (RLM5b) elevations in diabetes.</title>
        <authorList>
            <person name="Favreau L.V."/>
            <person name="Malchoff D.M."/>
            <person name="Mole J.E."/>
            <person name="Schenkman J.B."/>
        </authorList>
    </citation>
    <scope>PROTEIN SEQUENCE OF 2-35</scope>
    <source>
        <tissue>Liver</tissue>
    </source>
</reference>
<reference key="6">
    <citation type="journal article" date="1990" name="Arch. Biochem. Biophys.">
        <title>Changes in the amount of cytochrome P450s in rat hepatic microsomes with starvation.</title>
        <authorList>
            <person name="Imaoka S."/>
            <person name="Terano Y."/>
            <person name="Funae Y."/>
        </authorList>
    </citation>
    <scope>PROTEIN SEQUENCE OF 2-20</scope>
    <source>
        <tissue>Liver</tissue>
    </source>
</reference>
<reference key="7">
    <citation type="journal article" date="1992" name="Xenobiotica">
        <title>Molecular cloning of a cDNA for rat diabetes-inducible cytochrome P450RLM6: hormonal regulation and similarity to the cytochrome P4502E1 gene.</title>
        <authorList>
            <person name="Richardson T.H."/>
            <person name="Schenkman J.B."/>
            <person name="Turcan R."/>
            <person name="Goldfarb P.S."/>
            <person name="Gibson G.G."/>
        </authorList>
    </citation>
    <scope>NUCLEOTIDE SEQUENCE [GENOMIC DNA] OF 100-463</scope>
</reference>
<reference key="8">
    <citation type="journal article" date="2009" name="J. Biol. Chem.">
        <title>Mitochondrial targeting of cytochrome P450 proteins containing NH2-terminal chimeric signals involves an unusual TOM20/TOM22 bypass mechanism.</title>
        <authorList>
            <person name="Anandatheerthavarada H.K."/>
            <person name="Sepuri N.B."/>
            <person name="Avadhani N.G."/>
        </authorList>
    </citation>
    <scope>SUBCELLULAR LOCATION</scope>
    <scope>TOPOLOGY</scope>
    <scope>INTERACTION WITH HSP70</scope>
    <scope>INTERACTION WITH HSP90</scope>
    <scope>MUTAGENESIS OF SER-129</scope>
</reference>
<proteinExistence type="evidence at protein level"/>
<feature type="initiator methionine" description="Removed" evidence="4 5">
    <location>
        <position position="1"/>
    </location>
</feature>
<feature type="chain" id="PRO_0000051758" description="Cytochrome P450 2E1">
    <location>
        <begin position="2"/>
        <end position="493"/>
    </location>
</feature>
<feature type="binding site" evidence="1">
    <location>
        <begin position="298"/>
        <end position="303"/>
    </location>
    <ligand>
        <name>substrate</name>
    </ligand>
</feature>
<feature type="binding site" description="axial binding residue">
    <location>
        <position position="437"/>
    </location>
    <ligand>
        <name>heme</name>
        <dbReference type="ChEBI" id="CHEBI:30413"/>
    </ligand>
    <ligandPart>
        <name>Fe</name>
        <dbReference type="ChEBI" id="CHEBI:18248"/>
    </ligandPart>
</feature>
<feature type="mutagenesis site" description="Reduces interaction with HSP70; impairs interaction with HSP90." evidence="3">
    <original>S</original>
    <variation>A</variation>
    <location>
        <position position="129"/>
    </location>
</feature>
<feature type="sequence conflict" description="In Ref. 1; AAA41060." evidence="7" ref="1">
    <original>Q</original>
    <variation>K</variation>
    <location>
        <position position="25"/>
    </location>
</feature>
<comment type="function">
    <text evidence="2">A cytochrome P450 monooxygenase involved in the metabolism of fatty acids. Mechanistically, uses molecular oxygen inserting one oxygen atom into a substrate, and reducing the second into a water molecule, with two electrons provided by NADPH via cytochrome P450 reductase (NADPH--hemoprotein reductase). Catalyzes the hydroxylation of carbon-hydrogen bonds. Hydroxylates fatty acids specifically at the omega-1 position displaying the highest catalytic activity for saturated fatty acids. May be involved in the oxidative metabolism of xenobiotics.</text>
</comment>
<comment type="catalytic activity">
    <reaction evidence="2">
        <text>an organic molecule + reduced [NADPH--hemoprotein reductase] + O2 = an alcohol + oxidized [NADPH--hemoprotein reductase] + H2O + H(+)</text>
        <dbReference type="Rhea" id="RHEA:17149"/>
        <dbReference type="Rhea" id="RHEA-COMP:11964"/>
        <dbReference type="Rhea" id="RHEA-COMP:11965"/>
        <dbReference type="ChEBI" id="CHEBI:15377"/>
        <dbReference type="ChEBI" id="CHEBI:15378"/>
        <dbReference type="ChEBI" id="CHEBI:15379"/>
        <dbReference type="ChEBI" id="CHEBI:30879"/>
        <dbReference type="ChEBI" id="CHEBI:57618"/>
        <dbReference type="ChEBI" id="CHEBI:58210"/>
        <dbReference type="ChEBI" id="CHEBI:142491"/>
        <dbReference type="EC" id="1.14.14.1"/>
    </reaction>
    <physiologicalReaction direction="left-to-right" evidence="2">
        <dbReference type="Rhea" id="RHEA:17150"/>
    </physiologicalReaction>
</comment>
<comment type="catalytic activity">
    <reaction evidence="2">
        <text>(5Z,8Z,11Z)-eicosatrienoate + reduced [NADPH--hemoprotein reductase] + O2 = 19-hydroxy-(5Z,8Z,11Z)-eicosatrienoate + oxidized [NADPH--hemoprotein reductase] + H2O + H(+)</text>
        <dbReference type="Rhea" id="RHEA:50076"/>
        <dbReference type="Rhea" id="RHEA-COMP:11964"/>
        <dbReference type="Rhea" id="RHEA-COMP:11965"/>
        <dbReference type="ChEBI" id="CHEBI:15377"/>
        <dbReference type="ChEBI" id="CHEBI:15378"/>
        <dbReference type="ChEBI" id="CHEBI:15379"/>
        <dbReference type="ChEBI" id="CHEBI:57618"/>
        <dbReference type="ChEBI" id="CHEBI:58210"/>
        <dbReference type="ChEBI" id="CHEBI:78043"/>
        <dbReference type="ChEBI" id="CHEBI:132024"/>
    </reaction>
    <physiologicalReaction direction="left-to-right" evidence="2">
        <dbReference type="Rhea" id="RHEA:50077"/>
    </physiologicalReaction>
</comment>
<comment type="catalytic activity">
    <reaction evidence="2">
        <text>(5Z,8Z,11Z,14Z,17Z)-eicosapentaenoate + reduced [NADPH--hemoprotein reductase] + O2 = 19-hydroxy-(5Z,8Z,11Z,14Z,17Z)-eicosapentaenoate + oxidized [NADPH--hemoprotein reductase] + H2O + H(+)</text>
        <dbReference type="Rhea" id="RHEA:39787"/>
        <dbReference type="Rhea" id="RHEA-COMP:11964"/>
        <dbReference type="Rhea" id="RHEA-COMP:11965"/>
        <dbReference type="ChEBI" id="CHEBI:15377"/>
        <dbReference type="ChEBI" id="CHEBI:15378"/>
        <dbReference type="ChEBI" id="CHEBI:15379"/>
        <dbReference type="ChEBI" id="CHEBI:57618"/>
        <dbReference type="ChEBI" id="CHEBI:58210"/>
        <dbReference type="ChEBI" id="CHEBI:58562"/>
        <dbReference type="ChEBI" id="CHEBI:76636"/>
    </reaction>
    <physiologicalReaction direction="left-to-right" evidence="2">
        <dbReference type="Rhea" id="RHEA:39788"/>
    </physiologicalReaction>
</comment>
<comment type="catalytic activity">
    <reaction evidence="2">
        <text>(4Z,7Z,10Z,13Z,16Z,19Z)-docosahexaenoate + reduced [NADPH--hemoprotein reductase] + O2 = 21-hydroxy-(4Z,7Z,10Z,13Z,16Z,19Z)-docosahexaenoate + oxidized [NADPH--hemoprotein reductase] + H2O + H(+)</text>
        <dbReference type="Rhea" id="RHEA:50088"/>
        <dbReference type="Rhea" id="RHEA-COMP:11964"/>
        <dbReference type="Rhea" id="RHEA-COMP:11965"/>
        <dbReference type="ChEBI" id="CHEBI:15377"/>
        <dbReference type="ChEBI" id="CHEBI:15378"/>
        <dbReference type="ChEBI" id="CHEBI:15379"/>
        <dbReference type="ChEBI" id="CHEBI:57618"/>
        <dbReference type="ChEBI" id="CHEBI:58210"/>
        <dbReference type="ChEBI" id="CHEBI:77016"/>
        <dbReference type="ChEBI" id="CHEBI:132025"/>
    </reaction>
    <physiologicalReaction direction="left-to-right" evidence="2">
        <dbReference type="Rhea" id="RHEA:50089"/>
    </physiologicalReaction>
</comment>
<comment type="catalytic activity">
    <reaction evidence="2">
        <text>dodecanoate + reduced [NADPH--hemoprotein reductase] + O2 = 11-hydroxydodecanoate + oxidized [NADPH--hemoprotein reductase] + H2O + H(+)</text>
        <dbReference type="Rhea" id="RHEA:39751"/>
        <dbReference type="Rhea" id="RHEA-COMP:11964"/>
        <dbReference type="Rhea" id="RHEA-COMP:11965"/>
        <dbReference type="ChEBI" id="CHEBI:15377"/>
        <dbReference type="ChEBI" id="CHEBI:15378"/>
        <dbReference type="ChEBI" id="CHEBI:15379"/>
        <dbReference type="ChEBI" id="CHEBI:18262"/>
        <dbReference type="ChEBI" id="CHEBI:57618"/>
        <dbReference type="ChEBI" id="CHEBI:58210"/>
        <dbReference type="ChEBI" id="CHEBI:76628"/>
    </reaction>
    <physiologicalReaction direction="left-to-right" evidence="2">
        <dbReference type="Rhea" id="RHEA:39752"/>
    </physiologicalReaction>
</comment>
<comment type="catalytic activity">
    <reaction evidence="2">
        <text>tetradecanoate + reduced [NADPH--hemoprotein reductase] + O2 = 13-hydroxytetradecanoate + oxidized [NADPH--hemoprotein reductase] + H2O + H(+)</text>
        <dbReference type="Rhea" id="RHEA:50096"/>
        <dbReference type="Rhea" id="RHEA-COMP:11964"/>
        <dbReference type="Rhea" id="RHEA-COMP:11965"/>
        <dbReference type="ChEBI" id="CHEBI:15377"/>
        <dbReference type="ChEBI" id="CHEBI:15378"/>
        <dbReference type="ChEBI" id="CHEBI:15379"/>
        <dbReference type="ChEBI" id="CHEBI:30807"/>
        <dbReference type="ChEBI" id="CHEBI:57618"/>
        <dbReference type="ChEBI" id="CHEBI:58210"/>
        <dbReference type="ChEBI" id="CHEBI:132031"/>
    </reaction>
    <physiologicalReaction direction="left-to-right" evidence="2">
        <dbReference type="Rhea" id="RHEA:50097"/>
    </physiologicalReaction>
</comment>
<comment type="catalytic activity">
    <reaction evidence="2">
        <text>4-nitrophenol + NADPH + O2 + H(+) = 4-nitrocatechol + NADP(+) + H2O</text>
        <dbReference type="Rhea" id="RHEA:26205"/>
        <dbReference type="ChEBI" id="CHEBI:15377"/>
        <dbReference type="ChEBI" id="CHEBI:15378"/>
        <dbReference type="ChEBI" id="CHEBI:15379"/>
        <dbReference type="ChEBI" id="CHEBI:57730"/>
        <dbReference type="ChEBI" id="CHEBI:57783"/>
        <dbReference type="ChEBI" id="CHEBI:57917"/>
        <dbReference type="ChEBI" id="CHEBI:58349"/>
        <dbReference type="EC" id="1.14.13.n7"/>
    </reaction>
    <physiologicalReaction direction="left-to-right" evidence="2">
        <dbReference type="Rhea" id="RHEA:26206"/>
    </physiologicalReaction>
</comment>
<comment type="cofactor">
    <cofactor evidence="1">
        <name>heme</name>
        <dbReference type="ChEBI" id="CHEBI:30413"/>
    </cofactor>
</comment>
<comment type="activity regulation">
    <text evidence="2">The omega-1 hydroxylase activity is stimulated by cytochrome b5.</text>
</comment>
<comment type="pathway">
    <text evidence="2">Lipid metabolism; fatty acid metabolism.</text>
</comment>
<comment type="subunit">
    <text evidence="3">Interacts with chaperones HSP70 and HSP90; this interaction is required for initial targeting to mitochondria.</text>
</comment>
<comment type="subcellular location">
    <subcellularLocation>
        <location evidence="8">Endoplasmic reticulum membrane</location>
        <topology>Peripheral membrane protein</topology>
    </subcellularLocation>
    <subcellularLocation>
        <location evidence="8">Microsome membrane</location>
        <topology>Peripheral membrane protein</topology>
    </subcellularLocation>
    <subcellularLocation>
        <location evidence="8">Mitochondrion inner membrane</location>
        <topology evidence="8">Peripheral membrane protein</topology>
    </subcellularLocation>
    <text evidence="8">Post-translationally targeted to mitochondria. TOMM70 is required for the translocation across the mitochondrial outer membrane. After translocation into the matrix, associates with the inner membrane as a membrane extrinsic protein.</text>
</comment>
<comment type="induction">
    <text>By ethanol.</text>
</comment>
<comment type="similarity">
    <text evidence="7">Belongs to the cytochrome P450 family.</text>
</comment>
<evidence type="ECO:0000250" key="1"/>
<evidence type="ECO:0000250" key="2">
    <source>
        <dbReference type="UniProtKB" id="P05181"/>
    </source>
</evidence>
<evidence type="ECO:0000269" key="3">
    <source>
    </source>
</evidence>
<evidence type="ECO:0000269" key="4">
    <source>
    </source>
</evidence>
<evidence type="ECO:0000269" key="5">
    <source>
    </source>
</evidence>
<evidence type="ECO:0000303" key="6">
    <source>
    </source>
</evidence>
<evidence type="ECO:0000305" key="7"/>
<evidence type="ECO:0000305" key="8">
    <source>
    </source>
</evidence>
<evidence type="ECO:0000312" key="9">
    <source>
        <dbReference type="RGD" id="2475"/>
    </source>
</evidence>
<sequence length="493" mass="56627">MAVLGITIALLVWVATLLVISIWKQIYNSWNLPPGPFPLPILGNIFQLDLKDIPKSFTKLAKRFGPVFTLHLGSRRIVVLHGYKAVKEVLLNHKNEFSGRGDIPVFQEYKNKGIIFNNGPTWKDVRRFSLSILRDWGMGKQGNEARIQREAQFLVEELKKTKGQPFDPTFLIGCAPCNVIADILFNKRFDYNDKKCLRLMSLFNENFYLLSTPWIQLYNNFADYLRYLPGSHRKIMKNVSEIKQYTLEKAKEHLQSLDINCARDVTDCLLIEMEKEKHSQEPMYTMENVSVTLADLFFAGTETTSTTLRYGLLILMKYPEIEEKLHEEIDRVIGPSRVPAVRDRLDMPYMDAVVHEIQRFINLVPSNLPHEATRDTVFQGYVIPKGTVVIPTLDSLLYDSHEFPDPEKFKPEHFLNENGKFKYSDYFKAFSAGKRVCVGEGLARMELFLLLSAILQHFNLKSLVDPKDIDLSPVTVGFGSIPPQFKLCVIPRS</sequence>
<accession>P05182</accession>
<gene>
    <name evidence="6 9" type="primary">Cyp2e1</name>
    <name type="synonym">Cyp2e</name>
    <name type="synonym">Cyp2e-1</name>
</gene>
<protein>
    <recommendedName>
        <fullName>Cytochrome P450 2E1</fullName>
        <ecNumber evidence="2">1.14.14.1</ecNumber>
    </recommendedName>
    <alternativeName>
        <fullName>4-nitrophenol 2-hydroxylase</fullName>
        <ecNumber evidence="2">1.14.13.n7</ecNumber>
    </alternativeName>
    <alternativeName>
        <fullName>CYPIIE1</fullName>
    </alternativeName>
    <alternativeName>
        <fullName>Cytochrome P450-J</fullName>
    </alternativeName>
    <alternativeName>
        <fullName>Cytochrome P450RLM6</fullName>
    </alternativeName>
</protein>
<keyword id="KW-0903">Direct protein sequencing</keyword>
<keyword id="KW-0256">Endoplasmic reticulum</keyword>
<keyword id="KW-0276">Fatty acid metabolism</keyword>
<keyword id="KW-0349">Heme</keyword>
<keyword id="KW-0408">Iron</keyword>
<keyword id="KW-0443">Lipid metabolism</keyword>
<keyword id="KW-0472">Membrane</keyword>
<keyword id="KW-0479">Metal-binding</keyword>
<keyword id="KW-0492">Microsome</keyword>
<keyword id="KW-0496">Mitochondrion</keyword>
<keyword id="KW-0999">Mitochondrion inner membrane</keyword>
<keyword id="KW-0503">Monooxygenase</keyword>
<keyword id="KW-0521">NADP</keyword>
<keyword id="KW-0560">Oxidoreductase</keyword>
<keyword id="KW-1185">Reference proteome</keyword>
<organism>
    <name type="scientific">Rattus norvegicus</name>
    <name type="common">Rat</name>
    <dbReference type="NCBI Taxonomy" id="10116"/>
    <lineage>
        <taxon>Eukaryota</taxon>
        <taxon>Metazoa</taxon>
        <taxon>Chordata</taxon>
        <taxon>Craniata</taxon>
        <taxon>Vertebrata</taxon>
        <taxon>Euteleostomi</taxon>
        <taxon>Mammalia</taxon>
        <taxon>Eutheria</taxon>
        <taxon>Euarchontoglires</taxon>
        <taxon>Glires</taxon>
        <taxon>Rodentia</taxon>
        <taxon>Myomorpha</taxon>
        <taxon>Muroidea</taxon>
        <taxon>Muridae</taxon>
        <taxon>Murinae</taxon>
        <taxon>Rattus</taxon>
    </lineage>
</organism>